<name>YTRP_PSEPU</name>
<accession>P40604</accession>
<proteinExistence type="inferred from homology"/>
<evidence type="ECO:0000250" key="1"/>
<evidence type="ECO:0000255" key="2"/>
<evidence type="ECO:0000255" key="3">
    <source>
        <dbReference type="PROSITE-ProRule" id="PRU00556"/>
    </source>
</evidence>
<evidence type="ECO:0000256" key="4">
    <source>
        <dbReference type="SAM" id="MobiDB-lite"/>
    </source>
</evidence>
<evidence type="ECO:0000305" key="5"/>
<sequence>MRKAPLLRFTLASLALACSQAFAAPSPYSGMIVFGDSLSDAGQFGGVRFTNLDANGNYAPVSPMILGGQLGVNPTELGPSTSPLNPVLGLPDGNNWAVGGYTTQQILDSITSTSETVIPPGRPGAGQVLREKPGYLANGLRADPNALYYLTGGGNDFLQGLVNSPADAAAAGARLAASAQALQQGGARYIMVWLLPDLGQTPNFSGTPQQTPLSLLSGVFNQSLLSQLGQIDAEIIPLNVPMLLSEALASPSQFGLATGQNLVGTCSSGEGCVENPVYGINGTTPDPTKLLFNDLVHPTIAGQQLIADYAYSILSAPWELTLLPEMAHTSLRAHQDELRNQWQTPWQAVGSGKPLSPAAPRTWISTARAGASGDGRGYNLTVGGSYRLNDAWRLGLAGGVYRQKLEAGGHDSDYTLNSYLASAFAQYRQDRWWADAALTAGHLDYSDLKRTFALGVNDRSEKGDTDGEAWAISGRLGYNLAADSSNWQLAPFISADYARVKVDGYDEKSGRSTALGFDDQARTSRRLGLGLQGSVQVLPSTRLFAEVAQEHEFEDDRQDVTMHLTSLPANDFTLTGYTPHTAPDPGEPGGKP</sequence>
<organism>
    <name type="scientific">Pseudomonas putida</name>
    <name type="common">Arthrobacter siderocapsulatus</name>
    <dbReference type="NCBI Taxonomy" id="303"/>
    <lineage>
        <taxon>Bacteria</taxon>
        <taxon>Pseudomonadati</taxon>
        <taxon>Pseudomonadota</taxon>
        <taxon>Gammaproteobacteria</taxon>
        <taxon>Pseudomonadales</taxon>
        <taxon>Pseudomonadaceae</taxon>
        <taxon>Pseudomonas</taxon>
    </lineage>
</organism>
<reference key="1">
    <citation type="journal article" date="1990" name="J. Bacteriol.">
        <title>Evolutionary differences in chromosomal locations of four early genes of the tryptophan pathway in fluorescent pseudomonads: DNA sequences and characterization of Pseudomonas putida trpE and trpGDC.</title>
        <authorList>
            <person name="Essar D.W."/>
            <person name="Eberly L."/>
            <person name="Crawford I.P."/>
        </authorList>
    </citation>
    <scope>NUCLEOTIDE SEQUENCE [GENOMIC DNA]</scope>
    <source>
        <strain>ATCC 23287 / C1S</strain>
    </source>
</reference>
<comment type="similarity">
    <text evidence="5">Belongs to the 'GDSL' lipolytic enzyme family.</text>
</comment>
<dbReference type="EMBL" id="M33799">
    <property type="status" value="NOT_ANNOTATED_CDS"/>
    <property type="molecule type" value="Genomic_DNA"/>
</dbReference>
<dbReference type="PIR" id="G35115">
    <property type="entry name" value="G35115"/>
</dbReference>
<dbReference type="SMR" id="P40604"/>
<dbReference type="GO" id="GO:0019867">
    <property type="term" value="C:outer membrane"/>
    <property type="evidence" value="ECO:0007669"/>
    <property type="project" value="InterPro"/>
</dbReference>
<dbReference type="GO" id="GO:0016298">
    <property type="term" value="F:lipase activity"/>
    <property type="evidence" value="ECO:0007669"/>
    <property type="project" value="InterPro"/>
</dbReference>
<dbReference type="GO" id="GO:0006629">
    <property type="term" value="P:lipid metabolic process"/>
    <property type="evidence" value="ECO:0007669"/>
    <property type="project" value="InterPro"/>
</dbReference>
<dbReference type="CDD" id="cd01847">
    <property type="entry name" value="Triacylglycerol_lipase_like"/>
    <property type="match status" value="1"/>
</dbReference>
<dbReference type="Gene3D" id="2.40.128.130">
    <property type="entry name" value="Autotransporter beta-domain"/>
    <property type="match status" value="1"/>
</dbReference>
<dbReference type="Gene3D" id="3.40.50.1110">
    <property type="entry name" value="SGNH hydrolase"/>
    <property type="match status" value="1"/>
</dbReference>
<dbReference type="InterPro" id="IPR005546">
    <property type="entry name" value="Autotransporte_beta"/>
</dbReference>
<dbReference type="InterPro" id="IPR036709">
    <property type="entry name" value="Autotransporte_beta_dom_sf"/>
</dbReference>
<dbReference type="InterPro" id="IPR001087">
    <property type="entry name" value="GDSL"/>
</dbReference>
<dbReference type="InterPro" id="IPR050592">
    <property type="entry name" value="GDSL_lipolytic_enzyme"/>
</dbReference>
<dbReference type="InterPro" id="IPR017186">
    <property type="entry name" value="Lipase_autotranspt_EstA"/>
</dbReference>
<dbReference type="InterPro" id="IPR008265">
    <property type="entry name" value="Lipase_GDSL_AS"/>
</dbReference>
<dbReference type="InterPro" id="IPR006315">
    <property type="entry name" value="OM_autotransptr_brl_dom"/>
</dbReference>
<dbReference type="InterPro" id="IPR036514">
    <property type="entry name" value="SGNH_hydro_sf"/>
</dbReference>
<dbReference type="NCBIfam" id="TIGR01414">
    <property type="entry name" value="autotrans_barl"/>
    <property type="match status" value="1"/>
</dbReference>
<dbReference type="PANTHER" id="PTHR45642">
    <property type="entry name" value="GDSL ESTERASE/LIPASE EXL3"/>
    <property type="match status" value="1"/>
</dbReference>
<dbReference type="PANTHER" id="PTHR45642:SF139">
    <property type="entry name" value="SGNH HYDROLASE-TYPE ESTERASE DOMAIN-CONTAINING PROTEIN"/>
    <property type="match status" value="1"/>
</dbReference>
<dbReference type="Pfam" id="PF03797">
    <property type="entry name" value="Autotransporter"/>
    <property type="match status" value="1"/>
</dbReference>
<dbReference type="Pfam" id="PF00657">
    <property type="entry name" value="Lipase_GDSL"/>
    <property type="match status" value="1"/>
</dbReference>
<dbReference type="PIRSF" id="PIRSF037375">
    <property type="entry name" value="Autotrns_EstA"/>
    <property type="match status" value="1"/>
</dbReference>
<dbReference type="SMART" id="SM00869">
    <property type="entry name" value="Autotransporter"/>
    <property type="match status" value="1"/>
</dbReference>
<dbReference type="SUPFAM" id="SSF103515">
    <property type="entry name" value="Autotransporter"/>
    <property type="match status" value="1"/>
</dbReference>
<dbReference type="SUPFAM" id="SSF52266">
    <property type="entry name" value="SGNH hydrolase"/>
    <property type="match status" value="1"/>
</dbReference>
<dbReference type="PROSITE" id="PS51208">
    <property type="entry name" value="AUTOTRANSPORTER"/>
    <property type="match status" value="1"/>
</dbReference>
<dbReference type="PROSITE" id="PS01098">
    <property type="entry name" value="LIPASE_GDSL_SER"/>
    <property type="match status" value="1"/>
</dbReference>
<keyword id="KW-0732">Signal</keyword>
<feature type="signal peptide" evidence="2">
    <location>
        <begin position="1"/>
        <end position="23"/>
    </location>
</feature>
<feature type="chain" id="PRO_0000017853" description="Uncharacterized protein in trpE-trpG intergenic region">
    <location>
        <begin position="24"/>
        <end position="592"/>
    </location>
</feature>
<feature type="domain" description="Autotransporter" evidence="3">
    <location>
        <begin position="334"/>
        <end position="592"/>
    </location>
</feature>
<feature type="region of interest" description="Disordered" evidence="4">
    <location>
        <begin position="572"/>
        <end position="592"/>
    </location>
</feature>
<feature type="active site" description="Nucleophile" evidence="1">
    <location>
        <position position="37"/>
    </location>
</feature>
<feature type="active site" evidence="1">
    <location>
        <position position="294"/>
    </location>
</feature>
<feature type="active site" evidence="1">
    <location>
        <position position="297"/>
    </location>
</feature>
<protein>
    <recommendedName>
        <fullName>Uncharacterized protein in trpE-trpG intergenic region</fullName>
    </recommendedName>
</protein>